<sequence>MPIIKTAGIISKPNSTAAEEIVPKLIEWLRRRGIAVRIDEQTSLYSGGVSGMPREEVPQSCDLVVVLGGDGTLLSAARAIGRREIPLFPVNLGGLGFLTAISIEELYPELERALRGEHRIAKRKLMTTEVIRENNVIASFDALNDAVLTKSSIARMIDLDTYVDEQFVCAYKADGLIIATPTGSTAYSLSAGGPIIFPSVPAICLTPICPHMLTNRPVLVPETSVIRVASRGPDESVYLTIDGQVGTPIREHDTVVCHSSHHSLLLIRPPRMMFFDVLRQKLKWGER</sequence>
<organism>
    <name type="scientific">Solibacter usitatus (strain Ellin6076)</name>
    <dbReference type="NCBI Taxonomy" id="234267"/>
    <lineage>
        <taxon>Bacteria</taxon>
        <taxon>Pseudomonadati</taxon>
        <taxon>Acidobacteriota</taxon>
        <taxon>Terriglobia</taxon>
        <taxon>Bryobacterales</taxon>
        <taxon>Solibacteraceae</taxon>
        <taxon>Candidatus Solibacter</taxon>
    </lineage>
</organism>
<feature type="chain" id="PRO_1000192519" description="NAD kinase">
    <location>
        <begin position="1"/>
        <end position="287"/>
    </location>
</feature>
<feature type="active site" description="Proton acceptor" evidence="1">
    <location>
        <position position="70"/>
    </location>
</feature>
<feature type="binding site" evidence="1">
    <location>
        <begin position="70"/>
        <end position="71"/>
    </location>
    <ligand>
        <name>NAD(+)</name>
        <dbReference type="ChEBI" id="CHEBI:57540"/>
    </ligand>
</feature>
<feature type="binding site" evidence="1">
    <location>
        <begin position="144"/>
        <end position="145"/>
    </location>
    <ligand>
        <name>NAD(+)</name>
        <dbReference type="ChEBI" id="CHEBI:57540"/>
    </ligand>
</feature>
<feature type="binding site" evidence="1">
    <location>
        <position position="155"/>
    </location>
    <ligand>
        <name>NAD(+)</name>
        <dbReference type="ChEBI" id="CHEBI:57540"/>
    </ligand>
</feature>
<feature type="binding site" evidence="1">
    <location>
        <position position="172"/>
    </location>
    <ligand>
        <name>NAD(+)</name>
        <dbReference type="ChEBI" id="CHEBI:57540"/>
    </ligand>
</feature>
<feature type="binding site" evidence="1">
    <location>
        <position position="174"/>
    </location>
    <ligand>
        <name>NAD(+)</name>
        <dbReference type="ChEBI" id="CHEBI:57540"/>
    </ligand>
</feature>
<feature type="binding site" evidence="1">
    <location>
        <begin position="185"/>
        <end position="190"/>
    </location>
    <ligand>
        <name>NAD(+)</name>
        <dbReference type="ChEBI" id="CHEBI:57540"/>
    </ligand>
</feature>
<feature type="binding site" evidence="1">
    <location>
        <position position="244"/>
    </location>
    <ligand>
        <name>NAD(+)</name>
        <dbReference type="ChEBI" id="CHEBI:57540"/>
    </ligand>
</feature>
<gene>
    <name evidence="1" type="primary">nadK</name>
    <name type="ordered locus">Acid_1116</name>
</gene>
<proteinExistence type="inferred from homology"/>
<dbReference type="EC" id="2.7.1.23" evidence="1"/>
<dbReference type="EMBL" id="CP000473">
    <property type="protein sequence ID" value="ABJ82110.1"/>
    <property type="molecule type" value="Genomic_DNA"/>
</dbReference>
<dbReference type="SMR" id="Q02A16"/>
<dbReference type="FunCoup" id="Q02A16">
    <property type="interactions" value="599"/>
</dbReference>
<dbReference type="STRING" id="234267.Acid_1116"/>
<dbReference type="KEGG" id="sus:Acid_1116"/>
<dbReference type="eggNOG" id="COG0061">
    <property type="taxonomic scope" value="Bacteria"/>
</dbReference>
<dbReference type="HOGENOM" id="CLU_008831_0_1_0"/>
<dbReference type="InParanoid" id="Q02A16"/>
<dbReference type="OrthoDB" id="9774737at2"/>
<dbReference type="GO" id="GO:0005737">
    <property type="term" value="C:cytoplasm"/>
    <property type="evidence" value="ECO:0007669"/>
    <property type="project" value="UniProtKB-SubCell"/>
</dbReference>
<dbReference type="GO" id="GO:0005524">
    <property type="term" value="F:ATP binding"/>
    <property type="evidence" value="ECO:0007669"/>
    <property type="project" value="UniProtKB-KW"/>
</dbReference>
<dbReference type="GO" id="GO:0046872">
    <property type="term" value="F:metal ion binding"/>
    <property type="evidence" value="ECO:0007669"/>
    <property type="project" value="UniProtKB-UniRule"/>
</dbReference>
<dbReference type="GO" id="GO:0051287">
    <property type="term" value="F:NAD binding"/>
    <property type="evidence" value="ECO:0007669"/>
    <property type="project" value="UniProtKB-ARBA"/>
</dbReference>
<dbReference type="GO" id="GO:0003951">
    <property type="term" value="F:NAD+ kinase activity"/>
    <property type="evidence" value="ECO:0007669"/>
    <property type="project" value="UniProtKB-UniRule"/>
</dbReference>
<dbReference type="GO" id="GO:0019674">
    <property type="term" value="P:NAD metabolic process"/>
    <property type="evidence" value="ECO:0007669"/>
    <property type="project" value="InterPro"/>
</dbReference>
<dbReference type="GO" id="GO:0006741">
    <property type="term" value="P:NADP biosynthetic process"/>
    <property type="evidence" value="ECO:0007669"/>
    <property type="project" value="UniProtKB-UniRule"/>
</dbReference>
<dbReference type="FunFam" id="2.60.200.30:FF:000009">
    <property type="entry name" value="Poly(P)/ATP NAD kinase"/>
    <property type="match status" value="1"/>
</dbReference>
<dbReference type="Gene3D" id="3.40.50.10330">
    <property type="entry name" value="Probable inorganic polyphosphate/atp-NAD kinase, domain 1"/>
    <property type="match status" value="1"/>
</dbReference>
<dbReference type="Gene3D" id="2.60.200.30">
    <property type="entry name" value="Probable inorganic polyphosphate/atp-NAD kinase, domain 2"/>
    <property type="match status" value="1"/>
</dbReference>
<dbReference type="HAMAP" id="MF_00361">
    <property type="entry name" value="NAD_kinase"/>
    <property type="match status" value="1"/>
</dbReference>
<dbReference type="InterPro" id="IPR017438">
    <property type="entry name" value="ATP-NAD_kinase_N"/>
</dbReference>
<dbReference type="InterPro" id="IPR017437">
    <property type="entry name" value="ATP-NAD_kinase_PpnK-typ_C"/>
</dbReference>
<dbReference type="InterPro" id="IPR016064">
    <property type="entry name" value="NAD/diacylglycerol_kinase_sf"/>
</dbReference>
<dbReference type="InterPro" id="IPR002504">
    <property type="entry name" value="NADK"/>
</dbReference>
<dbReference type="PANTHER" id="PTHR20275">
    <property type="entry name" value="NAD KINASE"/>
    <property type="match status" value="1"/>
</dbReference>
<dbReference type="PANTHER" id="PTHR20275:SF0">
    <property type="entry name" value="NAD KINASE"/>
    <property type="match status" value="1"/>
</dbReference>
<dbReference type="Pfam" id="PF01513">
    <property type="entry name" value="NAD_kinase"/>
    <property type="match status" value="1"/>
</dbReference>
<dbReference type="Pfam" id="PF20143">
    <property type="entry name" value="NAD_kinase_C"/>
    <property type="match status" value="1"/>
</dbReference>
<dbReference type="SUPFAM" id="SSF111331">
    <property type="entry name" value="NAD kinase/diacylglycerol kinase-like"/>
    <property type="match status" value="1"/>
</dbReference>
<protein>
    <recommendedName>
        <fullName evidence="1">NAD kinase</fullName>
        <ecNumber evidence="1">2.7.1.23</ecNumber>
    </recommendedName>
    <alternativeName>
        <fullName evidence="1">ATP-dependent NAD kinase</fullName>
    </alternativeName>
</protein>
<name>NADK_SOLUE</name>
<reference key="1">
    <citation type="journal article" date="2009" name="Appl. Environ. Microbiol.">
        <title>Three genomes from the phylum Acidobacteria provide insight into the lifestyles of these microorganisms in soils.</title>
        <authorList>
            <person name="Ward N.L."/>
            <person name="Challacombe J.F."/>
            <person name="Janssen P.H."/>
            <person name="Henrissat B."/>
            <person name="Coutinho P.M."/>
            <person name="Wu M."/>
            <person name="Xie G."/>
            <person name="Haft D.H."/>
            <person name="Sait M."/>
            <person name="Badger J."/>
            <person name="Barabote R.D."/>
            <person name="Bradley B."/>
            <person name="Brettin T.S."/>
            <person name="Brinkac L.M."/>
            <person name="Bruce D."/>
            <person name="Creasy T."/>
            <person name="Daugherty S.C."/>
            <person name="Davidsen T.M."/>
            <person name="DeBoy R.T."/>
            <person name="Detter J.C."/>
            <person name="Dodson R.J."/>
            <person name="Durkin A.S."/>
            <person name="Ganapathy A."/>
            <person name="Gwinn-Giglio M."/>
            <person name="Han C.S."/>
            <person name="Khouri H."/>
            <person name="Kiss H."/>
            <person name="Kothari S.P."/>
            <person name="Madupu R."/>
            <person name="Nelson K.E."/>
            <person name="Nelson W.C."/>
            <person name="Paulsen I."/>
            <person name="Penn K."/>
            <person name="Ren Q."/>
            <person name="Rosovitz M.J."/>
            <person name="Selengut J.D."/>
            <person name="Shrivastava S."/>
            <person name="Sullivan S.A."/>
            <person name="Tapia R."/>
            <person name="Thompson L.S."/>
            <person name="Watkins K.L."/>
            <person name="Yang Q."/>
            <person name="Yu C."/>
            <person name="Zafar N."/>
            <person name="Zhou L."/>
            <person name="Kuske C.R."/>
        </authorList>
    </citation>
    <scope>NUCLEOTIDE SEQUENCE [LARGE SCALE GENOMIC DNA]</scope>
    <source>
        <strain>Ellin6076</strain>
    </source>
</reference>
<accession>Q02A16</accession>
<evidence type="ECO:0000255" key="1">
    <source>
        <dbReference type="HAMAP-Rule" id="MF_00361"/>
    </source>
</evidence>
<comment type="function">
    <text evidence="1">Involved in the regulation of the intracellular balance of NAD and NADP, and is a key enzyme in the biosynthesis of NADP. Catalyzes specifically the phosphorylation on 2'-hydroxyl of the adenosine moiety of NAD to yield NADP.</text>
</comment>
<comment type="catalytic activity">
    <reaction evidence="1">
        <text>NAD(+) + ATP = ADP + NADP(+) + H(+)</text>
        <dbReference type="Rhea" id="RHEA:18629"/>
        <dbReference type="ChEBI" id="CHEBI:15378"/>
        <dbReference type="ChEBI" id="CHEBI:30616"/>
        <dbReference type="ChEBI" id="CHEBI:57540"/>
        <dbReference type="ChEBI" id="CHEBI:58349"/>
        <dbReference type="ChEBI" id="CHEBI:456216"/>
        <dbReference type="EC" id="2.7.1.23"/>
    </reaction>
</comment>
<comment type="cofactor">
    <cofactor evidence="1">
        <name>a divalent metal cation</name>
        <dbReference type="ChEBI" id="CHEBI:60240"/>
    </cofactor>
</comment>
<comment type="subcellular location">
    <subcellularLocation>
        <location evidence="1">Cytoplasm</location>
    </subcellularLocation>
</comment>
<comment type="similarity">
    <text evidence="1">Belongs to the NAD kinase family.</text>
</comment>
<keyword id="KW-0067">ATP-binding</keyword>
<keyword id="KW-0963">Cytoplasm</keyword>
<keyword id="KW-0418">Kinase</keyword>
<keyword id="KW-0520">NAD</keyword>
<keyword id="KW-0521">NADP</keyword>
<keyword id="KW-0547">Nucleotide-binding</keyword>
<keyword id="KW-0808">Transferase</keyword>